<evidence type="ECO:0000256" key="1">
    <source>
        <dbReference type="SAM" id="MobiDB-lite"/>
    </source>
</evidence>
<evidence type="ECO:0000269" key="2">
    <source>
    </source>
</evidence>
<evidence type="ECO:0000305" key="3"/>
<evidence type="ECO:0000312" key="4">
    <source>
        <dbReference type="HGNC" id="HGNC:53857"/>
    </source>
</evidence>
<protein>
    <recommendedName>
        <fullName evidence="3">TATA-box-binding protein-associated factor 11-like protein 14</fullName>
    </recommendedName>
</protein>
<feature type="chain" id="PRO_0000456154" description="TATA-box-binding protein-associated factor 11-like protein 14">
    <location>
        <begin position="1"/>
        <end position="197"/>
    </location>
</feature>
<feature type="region of interest" description="Disordered" evidence="1">
    <location>
        <begin position="59"/>
        <end position="88"/>
    </location>
</feature>
<feature type="compositionally biased region" description="Basic and acidic residues" evidence="1">
    <location>
        <begin position="72"/>
        <end position="88"/>
    </location>
</feature>
<keyword id="KW-1185">Reference proteome</keyword>
<sequence>METGRQTGVSAEMFAIPRGLKGCNEDGIPEALDGNLEEPRAQECELRSEDVMDLTVVDNEASASAPPAAKRQKTDTKGQKERKPSVDAEEAQRMTTLLSAMSEEQLSRYEVCRQLAFPKALVARLMWSITGRSVPENMAIAMAGIAKVFVGEVVEEALDMCEMWGEMPPLQPMDLREAVCRLKPKGLFPNNYKKVMF</sequence>
<name>TFKLN_HUMAN</name>
<comment type="tissue specificity">
    <text evidence="2">Expressed in fetal brain and testis.</text>
</comment>
<comment type="similarity">
    <text evidence="3">Belongs to the TAF11 family.</text>
</comment>
<organism>
    <name type="scientific">Homo sapiens</name>
    <name type="common">Human</name>
    <dbReference type="NCBI Taxonomy" id="9606"/>
    <lineage>
        <taxon>Eukaryota</taxon>
        <taxon>Metazoa</taxon>
        <taxon>Chordata</taxon>
        <taxon>Craniata</taxon>
        <taxon>Vertebrata</taxon>
        <taxon>Euteleostomi</taxon>
        <taxon>Mammalia</taxon>
        <taxon>Eutheria</taxon>
        <taxon>Euarchontoglires</taxon>
        <taxon>Primates</taxon>
        <taxon>Haplorrhini</taxon>
        <taxon>Catarrhini</taxon>
        <taxon>Hominidae</taxon>
        <taxon>Homo</taxon>
    </lineage>
</organism>
<dbReference type="EMBL" id="AC233724">
    <property type="status" value="NOT_ANNOTATED_CDS"/>
    <property type="molecule type" value="Genomic_DNA"/>
</dbReference>
<dbReference type="CCDS" id="CCDS93700.1"/>
<dbReference type="RefSeq" id="NP_001388616.1">
    <property type="nucleotide sequence ID" value="NM_001401687.1"/>
</dbReference>
<dbReference type="SMR" id="A0A1W2PPL8"/>
<dbReference type="FunCoup" id="A0A1W2PPL8">
    <property type="interactions" value="23"/>
</dbReference>
<dbReference type="STRING" id="9606.ENSP00000491472"/>
<dbReference type="BioMuta" id="ENSG00000250782"/>
<dbReference type="MassIVE" id="A0A1W2PPL8"/>
<dbReference type="PeptideAtlas" id="A0A1W2PPL8"/>
<dbReference type="Ensembl" id="ENST00000512227.1">
    <property type="protein sequence ID" value="ENSP00000491472.1"/>
    <property type="gene ID" value="ENSG00000250782.1"/>
</dbReference>
<dbReference type="GeneID" id="112488740"/>
<dbReference type="MANE-Select" id="ENST00000512227.1">
    <property type="protein sequence ID" value="ENSP00000491472.1"/>
    <property type="RefSeq nucleotide sequence ID" value="NM_001401687.1"/>
    <property type="RefSeq protein sequence ID" value="NP_001388616.1"/>
</dbReference>
<dbReference type="AGR" id="HGNC:53857"/>
<dbReference type="GeneCards" id="TAF11L14"/>
<dbReference type="HGNC" id="HGNC:53857">
    <property type="gene designation" value="TAF11L14"/>
</dbReference>
<dbReference type="HPA" id="ENSG00000250782">
    <property type="expression patterns" value="Not detected"/>
</dbReference>
<dbReference type="OpenTargets" id="ENSG00000250782"/>
<dbReference type="VEuPathDB" id="HostDB:ENSG00000250782"/>
<dbReference type="GeneTree" id="ENSGT00390000013228"/>
<dbReference type="InParanoid" id="A0A1W2PPL8"/>
<dbReference type="OMA" id="EMFAIPR"/>
<dbReference type="OrthoDB" id="9532091at2759"/>
<dbReference type="PAN-GO" id="A0A1W2PPL8">
    <property type="GO annotations" value="3 GO annotations based on evolutionary models"/>
</dbReference>
<dbReference type="PRO" id="PR:A0A1W2PPL8"/>
<dbReference type="Proteomes" id="UP000005640">
    <property type="component" value="Chromosome 5"/>
</dbReference>
<dbReference type="RNAct" id="A0A1W2PPL8">
    <property type="molecule type" value="protein"/>
</dbReference>
<dbReference type="Bgee" id="ENSG00000250782">
    <property type="expression patterns" value="Expressed in hindlimb stylopod muscle and 7 other cell types or tissues"/>
</dbReference>
<dbReference type="GO" id="GO:0005669">
    <property type="term" value="C:transcription factor TFIID complex"/>
    <property type="evidence" value="ECO:0000318"/>
    <property type="project" value="GO_Central"/>
</dbReference>
<dbReference type="GO" id="GO:0046982">
    <property type="term" value="F:protein heterodimerization activity"/>
    <property type="evidence" value="ECO:0007669"/>
    <property type="project" value="InterPro"/>
</dbReference>
<dbReference type="GO" id="GO:0051123">
    <property type="term" value="P:RNA polymerase II preinitiation complex assembly"/>
    <property type="evidence" value="ECO:0000318"/>
    <property type="project" value="GO_Central"/>
</dbReference>
<dbReference type="CDD" id="cd08048">
    <property type="entry name" value="HFD_TAF11"/>
    <property type="match status" value="1"/>
</dbReference>
<dbReference type="FunFam" id="1.10.20.10:FF:000025">
    <property type="entry name" value="Transcription initiation factor TFIID subunit 11"/>
    <property type="match status" value="1"/>
</dbReference>
<dbReference type="Gene3D" id="1.10.20.10">
    <property type="entry name" value="Histone, subunit A"/>
    <property type="match status" value="1"/>
</dbReference>
<dbReference type="InterPro" id="IPR009072">
    <property type="entry name" value="Histone-fold"/>
</dbReference>
<dbReference type="InterPro" id="IPR045127">
    <property type="entry name" value="TAF11-like"/>
</dbReference>
<dbReference type="InterPro" id="IPR006809">
    <property type="entry name" value="TAFII28_dom"/>
</dbReference>
<dbReference type="PANTHER" id="PTHR13218:SF15">
    <property type="entry name" value="TATA-BOX BINDING PROTEIN ASSOCIATED FACTOR 11 LIKE PROTEIN 2-RELATED"/>
    <property type="match status" value="1"/>
</dbReference>
<dbReference type="PANTHER" id="PTHR13218">
    <property type="entry name" value="TRANSCRIPTION INITIATION FACTOR TFIID SUBUNIT 11-RELATED"/>
    <property type="match status" value="1"/>
</dbReference>
<dbReference type="Pfam" id="PF04719">
    <property type="entry name" value="TAFII28"/>
    <property type="match status" value="1"/>
</dbReference>
<dbReference type="SUPFAM" id="SSF47113">
    <property type="entry name" value="Histone-fold"/>
    <property type="match status" value="1"/>
</dbReference>
<gene>
    <name evidence="4" type="primary">TAF11L14</name>
</gene>
<proteinExistence type="evidence at transcript level"/>
<reference key="1">
    <citation type="journal article" date="2004" name="Nature">
        <title>The DNA sequence and comparative analysis of human chromosome 5.</title>
        <authorList>
            <person name="Schmutz J."/>
            <person name="Martin J."/>
            <person name="Terry A."/>
            <person name="Couronne O."/>
            <person name="Grimwood J."/>
            <person name="Lowry S."/>
            <person name="Gordon L.A."/>
            <person name="Scott D."/>
            <person name="Xie G."/>
            <person name="Huang W."/>
            <person name="Hellsten U."/>
            <person name="Tran-Gyamfi M."/>
            <person name="She X."/>
            <person name="Prabhakar S."/>
            <person name="Aerts A."/>
            <person name="Altherr M."/>
            <person name="Bajorek E."/>
            <person name="Black S."/>
            <person name="Branscomb E."/>
            <person name="Caoile C."/>
            <person name="Challacombe J.F."/>
            <person name="Chan Y.M."/>
            <person name="Denys M."/>
            <person name="Detter J.C."/>
            <person name="Escobar J."/>
            <person name="Flowers D."/>
            <person name="Fotopulos D."/>
            <person name="Glavina T."/>
            <person name="Gomez M."/>
            <person name="Gonzales E."/>
            <person name="Goodstein D."/>
            <person name="Grigoriev I."/>
            <person name="Groza M."/>
            <person name="Hammon N."/>
            <person name="Hawkins T."/>
            <person name="Haydu L."/>
            <person name="Israni S."/>
            <person name="Jett J."/>
            <person name="Kadner K."/>
            <person name="Kimball H."/>
            <person name="Kobayashi A."/>
            <person name="Lopez F."/>
            <person name="Lou Y."/>
            <person name="Martinez D."/>
            <person name="Medina C."/>
            <person name="Morgan J."/>
            <person name="Nandkeshwar R."/>
            <person name="Noonan J.P."/>
            <person name="Pitluck S."/>
            <person name="Pollard M."/>
            <person name="Predki P."/>
            <person name="Priest J."/>
            <person name="Ramirez L."/>
            <person name="Retterer J."/>
            <person name="Rodriguez A."/>
            <person name="Rogers S."/>
            <person name="Salamov A."/>
            <person name="Salazar A."/>
            <person name="Thayer N."/>
            <person name="Tice H."/>
            <person name="Tsai M."/>
            <person name="Ustaszewska A."/>
            <person name="Vo N."/>
            <person name="Wheeler J."/>
            <person name="Wu K."/>
            <person name="Yang J."/>
            <person name="Dickson M."/>
            <person name="Cheng J.-F."/>
            <person name="Eichler E.E."/>
            <person name="Olsen A."/>
            <person name="Pennacchio L.A."/>
            <person name="Rokhsar D.S."/>
            <person name="Richardson P."/>
            <person name="Lucas S.M."/>
            <person name="Myers R.M."/>
            <person name="Rubin E.M."/>
        </authorList>
    </citation>
    <scope>NUCLEOTIDE SEQUENCE [LARGE SCALE GENOMIC DNA]</scope>
</reference>
<reference key="2">
    <citation type="journal article" date="2010" name="BMC Genomics">
        <title>Expression, tandem repeat copy number variation and stability of four macrosatellite arrays in the human genome.</title>
        <authorList>
            <person name="Tremblay D.C."/>
            <person name="Alexander G. Jr."/>
            <person name="Moseley S."/>
            <person name="Chadwick B.P."/>
        </authorList>
    </citation>
    <scope>TISSUE SPECIFICITY</scope>
</reference>
<accession>A0A1W2PPL8</accession>